<sequence length="91" mass="10743">MPLHKSAEKRLRQSEKRNVRNRARKKELKVLLKNMQKLIDTSADKNVVEEAYRSAVQKLDRLGVKRYLHPNKASRKKAQLTKMLNNYVKVD</sequence>
<organism>
    <name type="scientific">Chlorobium phaeobacteroides (strain DSM 266 / SMG 266 / 2430)</name>
    <dbReference type="NCBI Taxonomy" id="290317"/>
    <lineage>
        <taxon>Bacteria</taxon>
        <taxon>Pseudomonadati</taxon>
        <taxon>Chlorobiota</taxon>
        <taxon>Chlorobiia</taxon>
        <taxon>Chlorobiales</taxon>
        <taxon>Chlorobiaceae</taxon>
        <taxon>Chlorobium/Pelodictyon group</taxon>
        <taxon>Chlorobium</taxon>
    </lineage>
</organism>
<comment type="function">
    <text evidence="1">Binds directly to 16S ribosomal RNA.</text>
</comment>
<comment type="similarity">
    <text evidence="1">Belongs to the bacterial ribosomal protein bS20 family.</text>
</comment>
<gene>
    <name evidence="1" type="primary">rpsT</name>
    <name type="ordered locus">Cpha266_0389</name>
</gene>
<protein>
    <recommendedName>
        <fullName evidence="1">Small ribosomal subunit protein bS20</fullName>
    </recommendedName>
    <alternativeName>
        <fullName evidence="3">30S ribosomal protein S20</fullName>
    </alternativeName>
</protein>
<reference key="1">
    <citation type="submission" date="2006-12" db="EMBL/GenBank/DDBJ databases">
        <title>Complete sequence of Chlorobium phaeobacteroides DSM 266.</title>
        <authorList>
            <consortium name="US DOE Joint Genome Institute"/>
            <person name="Copeland A."/>
            <person name="Lucas S."/>
            <person name="Lapidus A."/>
            <person name="Barry K."/>
            <person name="Detter J.C."/>
            <person name="Glavina del Rio T."/>
            <person name="Hammon N."/>
            <person name="Israni S."/>
            <person name="Pitluck S."/>
            <person name="Goltsman E."/>
            <person name="Schmutz J."/>
            <person name="Larimer F."/>
            <person name="Land M."/>
            <person name="Hauser L."/>
            <person name="Mikhailova N."/>
            <person name="Li T."/>
            <person name="Overmann J."/>
            <person name="Bryant D.A."/>
            <person name="Richardson P."/>
        </authorList>
    </citation>
    <scope>NUCLEOTIDE SEQUENCE [LARGE SCALE GENOMIC DNA]</scope>
    <source>
        <strain>DSM 266 / SMG 266 / 2430</strain>
    </source>
</reference>
<evidence type="ECO:0000255" key="1">
    <source>
        <dbReference type="HAMAP-Rule" id="MF_00500"/>
    </source>
</evidence>
<evidence type="ECO:0000256" key="2">
    <source>
        <dbReference type="SAM" id="MobiDB-lite"/>
    </source>
</evidence>
<evidence type="ECO:0000305" key="3"/>
<keyword id="KW-1185">Reference proteome</keyword>
<keyword id="KW-0687">Ribonucleoprotein</keyword>
<keyword id="KW-0689">Ribosomal protein</keyword>
<keyword id="KW-0694">RNA-binding</keyword>
<keyword id="KW-0699">rRNA-binding</keyword>
<feature type="chain" id="PRO_1000014570" description="Small ribosomal subunit protein bS20">
    <location>
        <begin position="1"/>
        <end position="91"/>
    </location>
</feature>
<feature type="region of interest" description="Disordered" evidence="2">
    <location>
        <begin position="1"/>
        <end position="24"/>
    </location>
</feature>
<feature type="compositionally biased region" description="Basic and acidic residues" evidence="2">
    <location>
        <begin position="1"/>
        <end position="18"/>
    </location>
</feature>
<name>RS20_CHLPD</name>
<accession>A1BDH1</accession>
<proteinExistence type="inferred from homology"/>
<dbReference type="EMBL" id="CP000492">
    <property type="protein sequence ID" value="ABL64448.1"/>
    <property type="molecule type" value="Genomic_DNA"/>
</dbReference>
<dbReference type="RefSeq" id="WP_011744281.1">
    <property type="nucleotide sequence ID" value="NC_008639.1"/>
</dbReference>
<dbReference type="SMR" id="A1BDH1"/>
<dbReference type="STRING" id="290317.Cpha266_0389"/>
<dbReference type="KEGG" id="cph:Cpha266_0389"/>
<dbReference type="eggNOG" id="COG0268">
    <property type="taxonomic scope" value="Bacteria"/>
</dbReference>
<dbReference type="HOGENOM" id="CLU_160655_3_1_10"/>
<dbReference type="OrthoDB" id="9808392at2"/>
<dbReference type="Proteomes" id="UP000008701">
    <property type="component" value="Chromosome"/>
</dbReference>
<dbReference type="GO" id="GO:0005829">
    <property type="term" value="C:cytosol"/>
    <property type="evidence" value="ECO:0007669"/>
    <property type="project" value="TreeGrafter"/>
</dbReference>
<dbReference type="GO" id="GO:0015935">
    <property type="term" value="C:small ribosomal subunit"/>
    <property type="evidence" value="ECO:0007669"/>
    <property type="project" value="TreeGrafter"/>
</dbReference>
<dbReference type="GO" id="GO:0070181">
    <property type="term" value="F:small ribosomal subunit rRNA binding"/>
    <property type="evidence" value="ECO:0007669"/>
    <property type="project" value="TreeGrafter"/>
</dbReference>
<dbReference type="GO" id="GO:0003735">
    <property type="term" value="F:structural constituent of ribosome"/>
    <property type="evidence" value="ECO:0007669"/>
    <property type="project" value="InterPro"/>
</dbReference>
<dbReference type="GO" id="GO:0006412">
    <property type="term" value="P:translation"/>
    <property type="evidence" value="ECO:0007669"/>
    <property type="project" value="UniProtKB-UniRule"/>
</dbReference>
<dbReference type="Gene3D" id="1.20.58.110">
    <property type="entry name" value="Ribosomal protein S20"/>
    <property type="match status" value="1"/>
</dbReference>
<dbReference type="HAMAP" id="MF_00500">
    <property type="entry name" value="Ribosomal_bS20"/>
    <property type="match status" value="1"/>
</dbReference>
<dbReference type="InterPro" id="IPR002583">
    <property type="entry name" value="Ribosomal_bS20"/>
</dbReference>
<dbReference type="InterPro" id="IPR036510">
    <property type="entry name" value="Ribosomal_bS20_sf"/>
</dbReference>
<dbReference type="NCBIfam" id="TIGR00029">
    <property type="entry name" value="S20"/>
    <property type="match status" value="1"/>
</dbReference>
<dbReference type="PANTHER" id="PTHR33398">
    <property type="entry name" value="30S RIBOSOMAL PROTEIN S20"/>
    <property type="match status" value="1"/>
</dbReference>
<dbReference type="PANTHER" id="PTHR33398:SF1">
    <property type="entry name" value="SMALL RIBOSOMAL SUBUNIT PROTEIN BS20C"/>
    <property type="match status" value="1"/>
</dbReference>
<dbReference type="Pfam" id="PF01649">
    <property type="entry name" value="Ribosomal_S20p"/>
    <property type="match status" value="1"/>
</dbReference>
<dbReference type="SUPFAM" id="SSF46992">
    <property type="entry name" value="Ribosomal protein S20"/>
    <property type="match status" value="1"/>
</dbReference>